<reference key="1">
    <citation type="journal article" date="1998" name="Virus Genes">
        <title>Nucleotide sequence of the 4.3 kbp BamHI-N fragment of fowlpox virus FP9.</title>
        <authorList>
            <person name="Pollitt E."/>
            <person name="Skinner M.A."/>
            <person name="Heaphy S."/>
        </authorList>
    </citation>
    <scope>NUCLEOTIDE SEQUENCE [GENOMIC DNA]</scope>
    <source>
        <strain>FP-9 / Isolate HP-440</strain>
    </source>
</reference>
<reference key="2">
    <citation type="journal article" date="2000" name="J. Virol.">
        <title>The genome of fowlpox virus.</title>
        <authorList>
            <person name="Afonso C.L."/>
            <person name="Tulman E.R."/>
            <person name="Lu Z."/>
            <person name="Zsak L."/>
            <person name="Kutish G.F."/>
            <person name="Rock D.L."/>
        </authorList>
    </citation>
    <scope>NUCLEOTIDE SEQUENCE [LARGE SCALE GENOMIC DNA]</scope>
</reference>
<name>I2_FOWPN</name>
<protein>
    <recommendedName>
        <fullName>Protein I2 homolog</fullName>
    </recommendedName>
    <alternativeName>
        <fullName>Protein FPV089</fullName>
    </alternativeName>
</protein>
<keyword id="KW-0426">Late protein</keyword>
<keyword id="KW-0472">Membrane</keyword>
<keyword id="KW-1185">Reference proteome</keyword>
<keyword id="KW-0812">Transmembrane</keyword>
<keyword id="KW-1133">Transmembrane helix</keyword>
<keyword id="KW-1162">Viral penetration into host cytoplasm</keyword>
<keyword id="KW-0946">Virion</keyword>
<keyword id="KW-1160">Virus entry into host cell</keyword>
<comment type="function">
    <text evidence="1">Late protein which probably plays a role in virus entry into the host cell.</text>
</comment>
<comment type="subcellular location">
    <subcellularLocation>
        <location evidence="3">Virion membrane</location>
        <topology evidence="3">Single-pass membrane protein</topology>
    </subcellularLocation>
    <text>Component of the membrane of the mature virion.</text>
</comment>
<comment type="induction">
    <text>Expressed in the late phase of the viral replicative cycle.</text>
</comment>
<comment type="similarity">
    <text evidence="3">Belongs to the chordopoxvirinae I2 family.</text>
</comment>
<organism>
    <name type="scientific">Fowlpox virus (strain NVSL)</name>
    <name type="common">FPV</name>
    <dbReference type="NCBI Taxonomy" id="928301"/>
    <lineage>
        <taxon>Viruses</taxon>
        <taxon>Varidnaviria</taxon>
        <taxon>Bamfordvirae</taxon>
        <taxon>Nucleocytoviricota</taxon>
        <taxon>Pokkesviricetes</taxon>
        <taxon>Chitovirales</taxon>
        <taxon>Poxviridae</taxon>
        <taxon>Chordopoxvirinae</taxon>
        <taxon>Avipoxvirus</taxon>
        <taxon>Fowlpox virus</taxon>
    </lineage>
</organism>
<sequence>MEKLFTGTYGVFLESNDSDFEDFINTIMTVLTGKKESKQLSWLTIFIIFVVCIVVFTFLYLKLMC</sequence>
<proteinExistence type="evidence at transcript level"/>
<accession>O72899</accession>
<gene>
    <name type="ordered locus">FPV089</name>
    <name type="ORF">FPI2L</name>
</gene>
<feature type="chain" id="PRO_0000099570" description="Protein I2 homolog">
    <location>
        <begin position="1"/>
        <end position="65"/>
    </location>
</feature>
<feature type="transmembrane region" description="Helical" evidence="2">
    <location>
        <begin position="40"/>
        <end position="60"/>
    </location>
</feature>
<dbReference type="EMBL" id="AJ223385">
    <property type="protein sequence ID" value="CAA11292.1"/>
    <property type="molecule type" value="Genomic_DNA"/>
</dbReference>
<dbReference type="EMBL" id="AF198100">
    <property type="protein sequence ID" value="AAF44433.1"/>
    <property type="molecule type" value="Genomic_DNA"/>
</dbReference>
<dbReference type="RefSeq" id="NP_039052.1">
    <property type="nucleotide sequence ID" value="NC_002188.1"/>
</dbReference>
<dbReference type="GeneID" id="1486637"/>
<dbReference type="KEGG" id="vg:1486637"/>
<dbReference type="Proteomes" id="UP000008597">
    <property type="component" value="Segment"/>
</dbReference>
<dbReference type="GO" id="GO:0016020">
    <property type="term" value="C:membrane"/>
    <property type="evidence" value="ECO:0007669"/>
    <property type="project" value="UniProtKB-KW"/>
</dbReference>
<dbReference type="GO" id="GO:0055036">
    <property type="term" value="C:virion membrane"/>
    <property type="evidence" value="ECO:0007669"/>
    <property type="project" value="UniProtKB-SubCell"/>
</dbReference>
<dbReference type="GO" id="GO:0046718">
    <property type="term" value="P:symbiont entry into host cell"/>
    <property type="evidence" value="ECO:0007669"/>
    <property type="project" value="UniProtKB-KW"/>
</dbReference>
<dbReference type="InterPro" id="IPR009175">
    <property type="entry name" value="Poxvirus_I2"/>
</dbReference>
<dbReference type="Pfam" id="PF12575">
    <property type="entry name" value="Pox_EPC_I2-L1"/>
    <property type="match status" value="1"/>
</dbReference>
<dbReference type="PIRSF" id="PIRSF003766">
    <property type="entry name" value="VAC_I2L"/>
    <property type="match status" value="1"/>
</dbReference>
<organismHost>
    <name type="scientific">Vertebrata</name>
    <dbReference type="NCBI Taxonomy" id="7742"/>
</organismHost>
<evidence type="ECO:0000250" key="1"/>
<evidence type="ECO:0000255" key="2"/>
<evidence type="ECO:0000305" key="3"/>